<accession>P27768</accession>
<reference key="1">
    <citation type="submission" date="1991-07" db="EMBL/GenBank/DDBJ databases">
        <title>Sequence of a cDNA encoding the rat fast skeletal muscle isoform of troponin I.</title>
        <authorList>
            <person name="Gravel M."/>
            <person name="Hastings K.E.M."/>
        </authorList>
    </citation>
    <scope>NUCLEOTIDE SEQUENCE [MRNA]</scope>
</reference>
<reference key="2">
    <citation type="journal article" date="2012" name="Nat. Commun.">
        <title>Quantitative maps of protein phosphorylation sites across 14 different rat organs and tissues.</title>
        <authorList>
            <person name="Lundby A."/>
            <person name="Secher A."/>
            <person name="Lage K."/>
            <person name="Nordsborg N.B."/>
            <person name="Dmytriyev A."/>
            <person name="Lundby C."/>
            <person name="Olsen J.V."/>
        </authorList>
    </citation>
    <scope>PHOSPHORYLATION [LARGE SCALE ANALYSIS] AT SER-118</scope>
    <scope>IDENTIFICATION BY MASS SPECTROMETRY [LARGE SCALE ANALYSIS]</scope>
</reference>
<gene>
    <name type="primary">Tnni2</name>
    <name type="synonym">Trp1</name>
</gene>
<proteinExistence type="evidence at protein level"/>
<comment type="function">
    <text>Troponin I is the inhibitory subunit of troponin, the thin filament regulatory complex which confers calcium-sensitivity to striated muscle actomyosin ATPase activity.</text>
</comment>
<comment type="subunit">
    <text>Binds to actin and tropomyosin.</text>
</comment>
<comment type="similarity">
    <text evidence="3">Belongs to the troponin I family.</text>
</comment>
<protein>
    <recommendedName>
        <fullName>Troponin I, fast skeletal muscle</fullName>
    </recommendedName>
    <alternativeName>
        <fullName>Troponin I, fast-twitch isoform</fullName>
    </alternativeName>
</protein>
<keyword id="KW-0007">Acetylation</keyword>
<keyword id="KW-0009">Actin-binding</keyword>
<keyword id="KW-0514">Muscle protein</keyword>
<keyword id="KW-0597">Phosphoprotein</keyword>
<keyword id="KW-1185">Reference proteome</keyword>
<sequence>MGDEEKRNRAITARRQHLKSVMLQIAATELEKEESRRESEKQNYLSEHCPPLHIPGSMSEVQELCKQLHAKIDAAEEEKYDMEVKVQKSSKELEDMNQKLFDLRGKFKRPPLRRVRMSADAMLKALLGSKHKVCMDLRANLKQVKKEDTEKERDLRDVGDWRKNIEEKSGMEGRKKMFESES</sequence>
<dbReference type="EMBL" id="M73701">
    <property type="protein sequence ID" value="AAA42149.1"/>
    <property type="molecule type" value="mRNA"/>
</dbReference>
<dbReference type="RefSeq" id="NP_058881.1">
    <property type="nucleotide sequence ID" value="NM_017185.1"/>
</dbReference>
<dbReference type="BMRB" id="P27768"/>
<dbReference type="SMR" id="P27768"/>
<dbReference type="FunCoup" id="P27768">
    <property type="interactions" value="69"/>
</dbReference>
<dbReference type="STRING" id="10116.ENSRNOP00000068190"/>
<dbReference type="CarbonylDB" id="P27768"/>
<dbReference type="iPTMnet" id="P27768"/>
<dbReference type="PhosphoSitePlus" id="P27768"/>
<dbReference type="PaxDb" id="10116-ENSRNOP00000068190"/>
<dbReference type="Ensembl" id="ENSRNOT00000027487.8">
    <property type="protein sequence ID" value="ENSRNOP00000027487.7"/>
    <property type="gene ID" value="ENSRNOG00000020276.8"/>
</dbReference>
<dbReference type="GeneID" id="29389"/>
<dbReference type="KEGG" id="rno:29389"/>
<dbReference type="UCSC" id="RGD:62050">
    <property type="organism name" value="rat"/>
</dbReference>
<dbReference type="AGR" id="RGD:62050"/>
<dbReference type="CTD" id="7136"/>
<dbReference type="RGD" id="62050">
    <property type="gene designation" value="Tnni2"/>
</dbReference>
<dbReference type="eggNOG" id="KOG3977">
    <property type="taxonomic scope" value="Eukaryota"/>
</dbReference>
<dbReference type="GeneTree" id="ENSGT01030000234588"/>
<dbReference type="InParanoid" id="P27768"/>
<dbReference type="OMA" id="KRHRAIT"/>
<dbReference type="OrthoDB" id="371899at2759"/>
<dbReference type="PhylomeDB" id="P27768"/>
<dbReference type="Reactome" id="R-RNO-390522">
    <property type="pathway name" value="Striated Muscle Contraction"/>
</dbReference>
<dbReference type="PRO" id="PR:P27768"/>
<dbReference type="Proteomes" id="UP000002494">
    <property type="component" value="Chromosome 1"/>
</dbReference>
<dbReference type="Bgee" id="ENSRNOG00000020276">
    <property type="expression patterns" value="Expressed in skeletal muscle tissue and 16 other cell types or tissues"/>
</dbReference>
<dbReference type="ExpressionAtlas" id="P27768">
    <property type="expression patterns" value="baseline and differential"/>
</dbReference>
<dbReference type="GO" id="GO:0005634">
    <property type="term" value="C:nucleus"/>
    <property type="evidence" value="ECO:0000266"/>
    <property type="project" value="RGD"/>
</dbReference>
<dbReference type="GO" id="GO:0005861">
    <property type="term" value="C:troponin complex"/>
    <property type="evidence" value="ECO:0000314"/>
    <property type="project" value="RGD"/>
</dbReference>
<dbReference type="GO" id="GO:0003779">
    <property type="term" value="F:actin binding"/>
    <property type="evidence" value="ECO:0007669"/>
    <property type="project" value="UniProtKB-KW"/>
</dbReference>
<dbReference type="GO" id="GO:0031014">
    <property type="term" value="F:troponin T binding"/>
    <property type="evidence" value="ECO:0000266"/>
    <property type="project" value="RGD"/>
</dbReference>
<dbReference type="GO" id="GO:0060048">
    <property type="term" value="P:cardiac muscle contraction"/>
    <property type="evidence" value="ECO:0000318"/>
    <property type="project" value="GO_Central"/>
</dbReference>
<dbReference type="GO" id="GO:0045893">
    <property type="term" value="P:positive regulation of DNA-templated transcription"/>
    <property type="evidence" value="ECO:0000266"/>
    <property type="project" value="RGD"/>
</dbReference>
<dbReference type="GO" id="GO:0090076">
    <property type="term" value="P:relaxation of skeletal muscle"/>
    <property type="evidence" value="ECO:0000270"/>
    <property type="project" value="RGD"/>
</dbReference>
<dbReference type="GO" id="GO:0003009">
    <property type="term" value="P:skeletal muscle contraction"/>
    <property type="evidence" value="ECO:0000266"/>
    <property type="project" value="RGD"/>
</dbReference>
<dbReference type="FunFam" id="1.20.5.350:FF:000002">
    <property type="entry name" value="troponin I, fast skeletal muscle"/>
    <property type="match status" value="1"/>
</dbReference>
<dbReference type="Gene3D" id="1.20.5.350">
    <property type="match status" value="1"/>
</dbReference>
<dbReference type="Gene3D" id="6.10.250.180">
    <property type="match status" value="1"/>
</dbReference>
<dbReference type="InterPro" id="IPR001978">
    <property type="entry name" value="Troponin"/>
</dbReference>
<dbReference type="InterPro" id="IPR050875">
    <property type="entry name" value="Troponin_I"/>
</dbReference>
<dbReference type="InterPro" id="IPR038077">
    <property type="entry name" value="Troponin_sf"/>
</dbReference>
<dbReference type="PANTHER" id="PTHR13738">
    <property type="entry name" value="TROPONIN I"/>
    <property type="match status" value="1"/>
</dbReference>
<dbReference type="PANTHER" id="PTHR13738:SF15">
    <property type="entry name" value="TROPONIN I, FAST SKELETAL MUSCLE"/>
    <property type="match status" value="1"/>
</dbReference>
<dbReference type="Pfam" id="PF00992">
    <property type="entry name" value="Troponin"/>
    <property type="match status" value="1"/>
</dbReference>
<dbReference type="SUPFAM" id="SSF90250">
    <property type="entry name" value="Troponin coil-coiled subunits"/>
    <property type="match status" value="1"/>
</dbReference>
<name>TNNI2_RAT</name>
<evidence type="ECO:0000250" key="1">
    <source>
        <dbReference type="UniProtKB" id="P02643"/>
    </source>
</evidence>
<evidence type="ECO:0000256" key="2">
    <source>
        <dbReference type="SAM" id="MobiDB-lite"/>
    </source>
</evidence>
<evidence type="ECO:0000305" key="3"/>
<evidence type="ECO:0007744" key="4">
    <source>
    </source>
</evidence>
<feature type="initiator methionine" description="Removed" evidence="1">
    <location>
        <position position="1"/>
    </location>
</feature>
<feature type="chain" id="PRO_0000186146" description="Troponin I, fast skeletal muscle">
    <location>
        <begin position="2"/>
        <end position="182"/>
    </location>
</feature>
<feature type="region of interest" description="Involved in binding TNC">
    <location>
        <begin position="2"/>
        <end position="48"/>
    </location>
</feature>
<feature type="region of interest" description="Disordered" evidence="2">
    <location>
        <begin position="29"/>
        <end position="53"/>
    </location>
</feature>
<feature type="region of interest" description="Involved in binding TNC and actin">
    <location>
        <begin position="97"/>
        <end position="117"/>
    </location>
</feature>
<feature type="compositionally biased region" description="Basic and acidic residues" evidence="2">
    <location>
        <begin position="29"/>
        <end position="41"/>
    </location>
</feature>
<feature type="modified residue" description="N-acetylglycine" evidence="1">
    <location>
        <position position="2"/>
    </location>
</feature>
<feature type="modified residue" description="Phosphothreonine" evidence="1">
    <location>
        <position position="12"/>
    </location>
</feature>
<feature type="modified residue" description="Phosphoserine" evidence="4">
    <location>
        <position position="118"/>
    </location>
</feature>
<organism>
    <name type="scientific">Rattus norvegicus</name>
    <name type="common">Rat</name>
    <dbReference type="NCBI Taxonomy" id="10116"/>
    <lineage>
        <taxon>Eukaryota</taxon>
        <taxon>Metazoa</taxon>
        <taxon>Chordata</taxon>
        <taxon>Craniata</taxon>
        <taxon>Vertebrata</taxon>
        <taxon>Euteleostomi</taxon>
        <taxon>Mammalia</taxon>
        <taxon>Eutheria</taxon>
        <taxon>Euarchontoglires</taxon>
        <taxon>Glires</taxon>
        <taxon>Rodentia</taxon>
        <taxon>Myomorpha</taxon>
        <taxon>Muroidea</taxon>
        <taxon>Muridae</taxon>
        <taxon>Murinae</taxon>
        <taxon>Rattus</taxon>
    </lineage>
</organism>